<proteinExistence type="inferred from homology"/>
<protein>
    <recommendedName>
        <fullName evidence="1">Large ribosomal subunit protein uL18</fullName>
    </recommendedName>
    <alternativeName>
        <fullName evidence="3">50S ribosomal protein L18</fullName>
    </alternativeName>
</protein>
<name>RL18_SYNY3</name>
<sequence>MKSTRKSATQRRHRRLRRHLSGTSERPRLAVFRSNDHIYAQVIDDVAQHTLAAASTLDPDLKKSLSSTATQEASAEVGKLVAQRAIAKGINQVVFDRGGKLYHGRVKALAEAAREAGLNF</sequence>
<dbReference type="EMBL" id="BA000022">
    <property type="protein sequence ID" value="BAA17334.1"/>
    <property type="molecule type" value="Genomic_DNA"/>
</dbReference>
<dbReference type="PIR" id="S77487">
    <property type="entry name" value="S77487"/>
</dbReference>
<dbReference type="SMR" id="P73305"/>
<dbReference type="FunCoup" id="P73305">
    <property type="interactions" value="470"/>
</dbReference>
<dbReference type="IntAct" id="P73305">
    <property type="interactions" value="1"/>
</dbReference>
<dbReference type="STRING" id="1148.gene:10498197"/>
<dbReference type="PaxDb" id="1148-1652412"/>
<dbReference type="EnsemblBacteria" id="BAA17334">
    <property type="protein sequence ID" value="BAA17334"/>
    <property type="gene ID" value="BAA17334"/>
</dbReference>
<dbReference type="KEGG" id="syn:sll1811"/>
<dbReference type="eggNOG" id="COG0256">
    <property type="taxonomic scope" value="Bacteria"/>
</dbReference>
<dbReference type="InParanoid" id="P73305"/>
<dbReference type="PhylomeDB" id="P73305"/>
<dbReference type="Proteomes" id="UP000001425">
    <property type="component" value="Chromosome"/>
</dbReference>
<dbReference type="GO" id="GO:0022625">
    <property type="term" value="C:cytosolic large ribosomal subunit"/>
    <property type="evidence" value="ECO:0000318"/>
    <property type="project" value="GO_Central"/>
</dbReference>
<dbReference type="GO" id="GO:0008097">
    <property type="term" value="F:5S rRNA binding"/>
    <property type="evidence" value="ECO:0000318"/>
    <property type="project" value="GO_Central"/>
</dbReference>
<dbReference type="GO" id="GO:0003735">
    <property type="term" value="F:structural constituent of ribosome"/>
    <property type="evidence" value="ECO:0007669"/>
    <property type="project" value="InterPro"/>
</dbReference>
<dbReference type="GO" id="GO:0006412">
    <property type="term" value="P:translation"/>
    <property type="evidence" value="ECO:0007669"/>
    <property type="project" value="UniProtKB-UniRule"/>
</dbReference>
<dbReference type="CDD" id="cd00432">
    <property type="entry name" value="Ribosomal_L18_L5e"/>
    <property type="match status" value="1"/>
</dbReference>
<dbReference type="FunFam" id="3.30.420.100:FF:000001">
    <property type="entry name" value="50S ribosomal protein L18"/>
    <property type="match status" value="1"/>
</dbReference>
<dbReference type="Gene3D" id="3.30.420.100">
    <property type="match status" value="1"/>
</dbReference>
<dbReference type="HAMAP" id="MF_01337_B">
    <property type="entry name" value="Ribosomal_uL18_B"/>
    <property type="match status" value="1"/>
</dbReference>
<dbReference type="InterPro" id="IPR004389">
    <property type="entry name" value="Ribosomal_uL18_bac-type"/>
</dbReference>
<dbReference type="InterPro" id="IPR005484">
    <property type="entry name" value="Ribosomal_uL18_bac/euk"/>
</dbReference>
<dbReference type="NCBIfam" id="TIGR00060">
    <property type="entry name" value="L18_bact"/>
    <property type="match status" value="1"/>
</dbReference>
<dbReference type="PANTHER" id="PTHR12899">
    <property type="entry name" value="39S RIBOSOMAL PROTEIN L18, MITOCHONDRIAL"/>
    <property type="match status" value="1"/>
</dbReference>
<dbReference type="PANTHER" id="PTHR12899:SF3">
    <property type="entry name" value="LARGE RIBOSOMAL SUBUNIT PROTEIN UL18M"/>
    <property type="match status" value="1"/>
</dbReference>
<dbReference type="Pfam" id="PF00861">
    <property type="entry name" value="Ribosomal_L18p"/>
    <property type="match status" value="1"/>
</dbReference>
<dbReference type="SUPFAM" id="SSF53137">
    <property type="entry name" value="Translational machinery components"/>
    <property type="match status" value="1"/>
</dbReference>
<reference key="1">
    <citation type="journal article" date="1996" name="DNA Res.">
        <title>Sequence analysis of the genome of the unicellular cyanobacterium Synechocystis sp. strain PCC6803. II. Sequence determination of the entire genome and assignment of potential protein-coding regions.</title>
        <authorList>
            <person name="Kaneko T."/>
            <person name="Sato S."/>
            <person name="Kotani H."/>
            <person name="Tanaka A."/>
            <person name="Asamizu E."/>
            <person name="Nakamura Y."/>
            <person name="Miyajima N."/>
            <person name="Hirosawa M."/>
            <person name="Sugiura M."/>
            <person name="Sasamoto S."/>
            <person name="Kimura T."/>
            <person name="Hosouchi T."/>
            <person name="Matsuno A."/>
            <person name="Muraki A."/>
            <person name="Nakazaki N."/>
            <person name="Naruo K."/>
            <person name="Okumura S."/>
            <person name="Shimpo S."/>
            <person name="Takeuchi C."/>
            <person name="Wada T."/>
            <person name="Watanabe A."/>
            <person name="Yamada M."/>
            <person name="Yasuda M."/>
            <person name="Tabata S."/>
        </authorList>
    </citation>
    <scope>NUCLEOTIDE SEQUENCE [LARGE SCALE GENOMIC DNA]</scope>
    <source>
        <strain>ATCC 27184 / PCC 6803 / Kazusa</strain>
    </source>
</reference>
<feature type="chain" id="PRO_0000131369" description="Large ribosomal subunit protein uL18">
    <location>
        <begin position="1"/>
        <end position="120"/>
    </location>
</feature>
<feature type="region of interest" description="Disordered" evidence="2">
    <location>
        <begin position="1"/>
        <end position="26"/>
    </location>
</feature>
<feature type="compositionally biased region" description="Basic residues" evidence="2">
    <location>
        <begin position="1"/>
        <end position="20"/>
    </location>
</feature>
<accession>P73305</accession>
<gene>
    <name evidence="1" type="primary">rplR</name>
    <name evidence="1" type="synonym">rpl18</name>
    <name type="ordered locus">sll1811</name>
</gene>
<keyword id="KW-1185">Reference proteome</keyword>
<keyword id="KW-0687">Ribonucleoprotein</keyword>
<keyword id="KW-0689">Ribosomal protein</keyword>
<keyword id="KW-0694">RNA-binding</keyword>
<keyword id="KW-0699">rRNA-binding</keyword>
<comment type="function">
    <text evidence="1">This is one of the proteins that bind and probably mediate the attachment of the 5S RNA into the large ribosomal subunit, where it forms part of the central protuberance.</text>
</comment>
<comment type="subunit">
    <text evidence="1">Part of the 50S ribosomal subunit; part of the 5S rRNA/L5/L18/L25 subcomplex. Contacts the 5S and 23S rRNAs.</text>
</comment>
<comment type="similarity">
    <text evidence="1">Belongs to the universal ribosomal protein uL18 family.</text>
</comment>
<organism>
    <name type="scientific">Synechocystis sp. (strain ATCC 27184 / PCC 6803 / Kazusa)</name>
    <dbReference type="NCBI Taxonomy" id="1111708"/>
    <lineage>
        <taxon>Bacteria</taxon>
        <taxon>Bacillati</taxon>
        <taxon>Cyanobacteriota</taxon>
        <taxon>Cyanophyceae</taxon>
        <taxon>Synechococcales</taxon>
        <taxon>Merismopediaceae</taxon>
        <taxon>Synechocystis</taxon>
    </lineage>
</organism>
<evidence type="ECO:0000255" key="1">
    <source>
        <dbReference type="HAMAP-Rule" id="MF_01337"/>
    </source>
</evidence>
<evidence type="ECO:0000256" key="2">
    <source>
        <dbReference type="SAM" id="MobiDB-lite"/>
    </source>
</evidence>
<evidence type="ECO:0000305" key="3"/>